<name>NUOK_XANP2</name>
<comment type="function">
    <text evidence="1">NDH-1 shuttles electrons from NADH, via FMN and iron-sulfur (Fe-S) centers, to quinones in the respiratory chain. The immediate electron acceptor for the enzyme in this species is believed to be ubiquinone. Couples the redox reaction to proton translocation (for every two electrons transferred, four hydrogen ions are translocated across the cytoplasmic membrane), and thus conserves the redox energy in a proton gradient.</text>
</comment>
<comment type="catalytic activity">
    <reaction evidence="1">
        <text>a quinone + NADH + 5 H(+)(in) = a quinol + NAD(+) + 4 H(+)(out)</text>
        <dbReference type="Rhea" id="RHEA:57888"/>
        <dbReference type="ChEBI" id="CHEBI:15378"/>
        <dbReference type="ChEBI" id="CHEBI:24646"/>
        <dbReference type="ChEBI" id="CHEBI:57540"/>
        <dbReference type="ChEBI" id="CHEBI:57945"/>
        <dbReference type="ChEBI" id="CHEBI:132124"/>
    </reaction>
</comment>
<comment type="subunit">
    <text evidence="1">NDH-1 is composed of 14 different subunits. Subunits NuoA, H, J, K, L, M, N constitute the membrane sector of the complex.</text>
</comment>
<comment type="subcellular location">
    <subcellularLocation>
        <location evidence="1">Cell inner membrane</location>
        <topology evidence="1">Multi-pass membrane protein</topology>
    </subcellularLocation>
</comment>
<comment type="similarity">
    <text evidence="1">Belongs to the complex I subunit 4L family.</text>
</comment>
<reference key="1">
    <citation type="submission" date="2007-07" db="EMBL/GenBank/DDBJ databases">
        <title>Complete sequence of chromosome of Xanthobacter autotrophicus Py2.</title>
        <authorList>
            <consortium name="US DOE Joint Genome Institute"/>
            <person name="Copeland A."/>
            <person name="Lucas S."/>
            <person name="Lapidus A."/>
            <person name="Barry K."/>
            <person name="Glavina del Rio T."/>
            <person name="Hammon N."/>
            <person name="Israni S."/>
            <person name="Dalin E."/>
            <person name="Tice H."/>
            <person name="Pitluck S."/>
            <person name="Sims D."/>
            <person name="Brettin T."/>
            <person name="Bruce D."/>
            <person name="Detter J.C."/>
            <person name="Han C."/>
            <person name="Tapia R."/>
            <person name="Brainard J."/>
            <person name="Schmutz J."/>
            <person name="Larimer F."/>
            <person name="Land M."/>
            <person name="Hauser L."/>
            <person name="Kyrpides N."/>
            <person name="Kim E."/>
            <person name="Ensigns S.A."/>
            <person name="Richardson P."/>
        </authorList>
    </citation>
    <scope>NUCLEOTIDE SEQUENCE [LARGE SCALE GENOMIC DNA]</scope>
    <source>
        <strain>ATCC BAA-1158 / Py2</strain>
    </source>
</reference>
<gene>
    <name evidence="1" type="primary">nuoK</name>
    <name type="ordered locus">Xaut_4623</name>
</gene>
<feature type="chain" id="PRO_0000390271" description="NADH-quinone oxidoreductase subunit K">
    <location>
        <begin position="1"/>
        <end position="104"/>
    </location>
</feature>
<feature type="transmembrane region" description="Helical" evidence="1">
    <location>
        <begin position="7"/>
        <end position="27"/>
    </location>
</feature>
<feature type="transmembrane region" description="Helical" evidence="1">
    <location>
        <begin position="33"/>
        <end position="53"/>
    </location>
</feature>
<feature type="transmembrane region" description="Helical" evidence="1">
    <location>
        <begin position="67"/>
        <end position="87"/>
    </location>
</feature>
<accession>A7IP97</accession>
<evidence type="ECO:0000255" key="1">
    <source>
        <dbReference type="HAMAP-Rule" id="MF_01456"/>
    </source>
</evidence>
<keyword id="KW-0997">Cell inner membrane</keyword>
<keyword id="KW-1003">Cell membrane</keyword>
<keyword id="KW-0472">Membrane</keyword>
<keyword id="KW-0520">NAD</keyword>
<keyword id="KW-0874">Quinone</keyword>
<keyword id="KW-1185">Reference proteome</keyword>
<keyword id="KW-1278">Translocase</keyword>
<keyword id="KW-0812">Transmembrane</keyword>
<keyword id="KW-1133">Transmembrane helix</keyword>
<keyword id="KW-0813">Transport</keyword>
<keyword id="KW-0830">Ubiquinone</keyword>
<dbReference type="EC" id="7.1.1.-" evidence="1"/>
<dbReference type="EMBL" id="CP000781">
    <property type="protein sequence ID" value="ABS69843.1"/>
    <property type="molecule type" value="Genomic_DNA"/>
</dbReference>
<dbReference type="SMR" id="A7IP97"/>
<dbReference type="STRING" id="78245.Xaut_4623"/>
<dbReference type="KEGG" id="xau:Xaut_4623"/>
<dbReference type="eggNOG" id="COG0713">
    <property type="taxonomic scope" value="Bacteria"/>
</dbReference>
<dbReference type="HOGENOM" id="CLU_144724_2_0_5"/>
<dbReference type="PhylomeDB" id="A7IP97"/>
<dbReference type="Proteomes" id="UP000002417">
    <property type="component" value="Chromosome"/>
</dbReference>
<dbReference type="GO" id="GO:0030964">
    <property type="term" value="C:NADH dehydrogenase complex"/>
    <property type="evidence" value="ECO:0007669"/>
    <property type="project" value="TreeGrafter"/>
</dbReference>
<dbReference type="GO" id="GO:0005886">
    <property type="term" value="C:plasma membrane"/>
    <property type="evidence" value="ECO:0007669"/>
    <property type="project" value="UniProtKB-SubCell"/>
</dbReference>
<dbReference type="GO" id="GO:0050136">
    <property type="term" value="F:NADH:ubiquinone reductase (non-electrogenic) activity"/>
    <property type="evidence" value="ECO:0007669"/>
    <property type="project" value="UniProtKB-UniRule"/>
</dbReference>
<dbReference type="GO" id="GO:0048038">
    <property type="term" value="F:quinone binding"/>
    <property type="evidence" value="ECO:0007669"/>
    <property type="project" value="UniProtKB-KW"/>
</dbReference>
<dbReference type="GO" id="GO:0042773">
    <property type="term" value="P:ATP synthesis coupled electron transport"/>
    <property type="evidence" value="ECO:0007669"/>
    <property type="project" value="InterPro"/>
</dbReference>
<dbReference type="FunFam" id="1.10.287.3510:FF:000001">
    <property type="entry name" value="NADH-quinone oxidoreductase subunit K"/>
    <property type="match status" value="1"/>
</dbReference>
<dbReference type="Gene3D" id="1.10.287.3510">
    <property type="match status" value="1"/>
</dbReference>
<dbReference type="HAMAP" id="MF_01456">
    <property type="entry name" value="NDH1_NuoK"/>
    <property type="match status" value="1"/>
</dbReference>
<dbReference type="InterPro" id="IPR001133">
    <property type="entry name" value="NADH_UbQ_OxRdtase_chain4L/K"/>
</dbReference>
<dbReference type="InterPro" id="IPR039428">
    <property type="entry name" value="NUOK/Mnh_C1-like"/>
</dbReference>
<dbReference type="NCBIfam" id="NF004320">
    <property type="entry name" value="PRK05715.1-2"/>
    <property type="match status" value="1"/>
</dbReference>
<dbReference type="NCBIfam" id="NF004321">
    <property type="entry name" value="PRK05715.1-3"/>
    <property type="match status" value="1"/>
</dbReference>
<dbReference type="NCBIfam" id="NF004323">
    <property type="entry name" value="PRK05715.1-5"/>
    <property type="match status" value="1"/>
</dbReference>
<dbReference type="PANTHER" id="PTHR11434:SF21">
    <property type="entry name" value="NADH DEHYDROGENASE SUBUNIT 4L-RELATED"/>
    <property type="match status" value="1"/>
</dbReference>
<dbReference type="PANTHER" id="PTHR11434">
    <property type="entry name" value="NADH-UBIQUINONE OXIDOREDUCTASE SUBUNIT ND4L"/>
    <property type="match status" value="1"/>
</dbReference>
<dbReference type="Pfam" id="PF00420">
    <property type="entry name" value="Oxidored_q2"/>
    <property type="match status" value="1"/>
</dbReference>
<organism>
    <name type="scientific">Xanthobacter autotrophicus (strain ATCC BAA-1158 / Py2)</name>
    <dbReference type="NCBI Taxonomy" id="78245"/>
    <lineage>
        <taxon>Bacteria</taxon>
        <taxon>Pseudomonadati</taxon>
        <taxon>Pseudomonadota</taxon>
        <taxon>Alphaproteobacteria</taxon>
        <taxon>Hyphomicrobiales</taxon>
        <taxon>Xanthobacteraceae</taxon>
        <taxon>Xanthobacter</taxon>
    </lineage>
</organism>
<sequence length="104" mass="11008">MGMDIGLSHYLTVAAILFTLGTLGIFLNRKNVIVILMSVELILLAVNINLVSFSAFLGNLTGQVFALLVLTVAAAEAAIGLAILVVFYRNRGSIAVEDINAMKG</sequence>
<protein>
    <recommendedName>
        <fullName evidence="1">NADH-quinone oxidoreductase subunit K</fullName>
        <ecNumber evidence="1">7.1.1.-</ecNumber>
    </recommendedName>
    <alternativeName>
        <fullName evidence="1">NADH dehydrogenase I subunit K</fullName>
    </alternativeName>
    <alternativeName>
        <fullName evidence="1">NDH-1 subunit K</fullName>
    </alternativeName>
</protein>
<proteinExistence type="inferred from homology"/>